<feature type="chain" id="PRO_0000290373" description="Ethylene-responsive transcription factor ERF011">
    <location>
        <begin position="1"/>
        <end position="153"/>
    </location>
</feature>
<feature type="DNA-binding region" description="AP2/ERF" evidence="2">
    <location>
        <begin position="20"/>
        <end position="77"/>
    </location>
</feature>
<gene>
    <name type="primary">ERF011</name>
    <name type="ordered locus">At3g50260</name>
    <name type="ORF">F11C1.100</name>
</gene>
<evidence type="ECO:0000250" key="1"/>
<evidence type="ECO:0000255" key="2">
    <source>
        <dbReference type="PROSITE-ProRule" id="PRU00366"/>
    </source>
</evidence>
<evidence type="ECO:0000305" key="3"/>
<organism>
    <name type="scientific">Arabidopsis thaliana</name>
    <name type="common">Mouse-ear cress</name>
    <dbReference type="NCBI Taxonomy" id="3702"/>
    <lineage>
        <taxon>Eukaryota</taxon>
        <taxon>Viridiplantae</taxon>
        <taxon>Streptophyta</taxon>
        <taxon>Embryophyta</taxon>
        <taxon>Tracheophyta</taxon>
        <taxon>Spermatophyta</taxon>
        <taxon>Magnoliopsida</taxon>
        <taxon>eudicotyledons</taxon>
        <taxon>Gunneridae</taxon>
        <taxon>Pentapetalae</taxon>
        <taxon>rosids</taxon>
        <taxon>malvids</taxon>
        <taxon>Brassicales</taxon>
        <taxon>Brassicaceae</taxon>
        <taxon>Camelineae</taxon>
        <taxon>Arabidopsis</taxon>
    </lineage>
</organism>
<proteinExistence type="evidence at transcript level"/>
<comment type="function">
    <text evidence="1">Probably acts as a transcriptional activator. Binds to the GCC-box pathogenesis-related promoter element. May be involved in the regulation of gene expression by stress factors and by components of stress signal transduction pathways (By similarity).</text>
</comment>
<comment type="subcellular location">
    <subcellularLocation>
        <location evidence="3">Nucleus</location>
    </subcellularLocation>
</comment>
<comment type="similarity">
    <text evidence="3">Belongs to the AP2/ERF transcription factor family. ERF subfamily.</text>
</comment>
<sequence>MDAGVAVKADVAVKMKRERPFKGIRMRKWGKWVAEIREPNKRSRLWLGSYSTPEAAARAYDTAVFYLRGPTATLNFPELLPCTSAEDMSAATIRKKATEVGAQVDAIGATVVQNNKRRRVFSQKRDFGGGLLELVDLNKLPDPENLDDDLVGK</sequence>
<name>ERF11_ARATH</name>
<reference key="1">
    <citation type="journal article" date="2000" name="Nature">
        <title>Sequence and analysis of chromosome 3 of the plant Arabidopsis thaliana.</title>
        <authorList>
            <person name="Salanoubat M."/>
            <person name="Lemcke K."/>
            <person name="Rieger M."/>
            <person name="Ansorge W."/>
            <person name="Unseld M."/>
            <person name="Fartmann B."/>
            <person name="Valle G."/>
            <person name="Bloecker H."/>
            <person name="Perez-Alonso M."/>
            <person name="Obermaier B."/>
            <person name="Delseny M."/>
            <person name="Boutry M."/>
            <person name="Grivell L.A."/>
            <person name="Mache R."/>
            <person name="Puigdomenech P."/>
            <person name="De Simone V."/>
            <person name="Choisne N."/>
            <person name="Artiguenave F."/>
            <person name="Robert C."/>
            <person name="Brottier P."/>
            <person name="Wincker P."/>
            <person name="Cattolico L."/>
            <person name="Weissenbach J."/>
            <person name="Saurin W."/>
            <person name="Quetier F."/>
            <person name="Schaefer M."/>
            <person name="Mueller-Auer S."/>
            <person name="Gabel C."/>
            <person name="Fuchs M."/>
            <person name="Benes V."/>
            <person name="Wurmbach E."/>
            <person name="Drzonek H."/>
            <person name="Erfle H."/>
            <person name="Jordan N."/>
            <person name="Bangert S."/>
            <person name="Wiedelmann R."/>
            <person name="Kranz H."/>
            <person name="Voss H."/>
            <person name="Holland R."/>
            <person name="Brandt P."/>
            <person name="Nyakatura G."/>
            <person name="Vezzi A."/>
            <person name="D'Angelo M."/>
            <person name="Pallavicini A."/>
            <person name="Toppo S."/>
            <person name="Simionati B."/>
            <person name="Conrad A."/>
            <person name="Hornischer K."/>
            <person name="Kauer G."/>
            <person name="Loehnert T.-H."/>
            <person name="Nordsiek G."/>
            <person name="Reichelt J."/>
            <person name="Scharfe M."/>
            <person name="Schoen O."/>
            <person name="Bargues M."/>
            <person name="Terol J."/>
            <person name="Climent J."/>
            <person name="Navarro P."/>
            <person name="Collado C."/>
            <person name="Perez-Perez A."/>
            <person name="Ottenwaelder B."/>
            <person name="Duchemin D."/>
            <person name="Cooke R."/>
            <person name="Laudie M."/>
            <person name="Berger-Llauro C."/>
            <person name="Purnelle B."/>
            <person name="Masuy D."/>
            <person name="de Haan M."/>
            <person name="Maarse A.C."/>
            <person name="Alcaraz J.-P."/>
            <person name="Cottet A."/>
            <person name="Casacuberta E."/>
            <person name="Monfort A."/>
            <person name="Argiriou A."/>
            <person name="Flores M."/>
            <person name="Liguori R."/>
            <person name="Vitale D."/>
            <person name="Mannhaupt G."/>
            <person name="Haase D."/>
            <person name="Schoof H."/>
            <person name="Rudd S."/>
            <person name="Zaccaria P."/>
            <person name="Mewes H.-W."/>
            <person name="Mayer K.F.X."/>
            <person name="Kaul S."/>
            <person name="Town C.D."/>
            <person name="Koo H.L."/>
            <person name="Tallon L.J."/>
            <person name="Jenkins J."/>
            <person name="Rooney T."/>
            <person name="Rizzo M."/>
            <person name="Walts A."/>
            <person name="Utterback T."/>
            <person name="Fujii C.Y."/>
            <person name="Shea T.P."/>
            <person name="Creasy T.H."/>
            <person name="Haas B."/>
            <person name="Maiti R."/>
            <person name="Wu D."/>
            <person name="Peterson J."/>
            <person name="Van Aken S."/>
            <person name="Pai G."/>
            <person name="Militscher J."/>
            <person name="Sellers P."/>
            <person name="Gill J.E."/>
            <person name="Feldblyum T.V."/>
            <person name="Preuss D."/>
            <person name="Lin X."/>
            <person name="Nierman W.C."/>
            <person name="Salzberg S.L."/>
            <person name="White O."/>
            <person name="Venter J.C."/>
            <person name="Fraser C.M."/>
            <person name="Kaneko T."/>
            <person name="Nakamura Y."/>
            <person name="Sato S."/>
            <person name="Kato T."/>
            <person name="Asamizu E."/>
            <person name="Sasamoto S."/>
            <person name="Kimura T."/>
            <person name="Idesawa K."/>
            <person name="Kawashima K."/>
            <person name="Kishida Y."/>
            <person name="Kiyokawa C."/>
            <person name="Kohara M."/>
            <person name="Matsumoto M."/>
            <person name="Matsuno A."/>
            <person name="Muraki A."/>
            <person name="Nakayama S."/>
            <person name="Nakazaki N."/>
            <person name="Shinpo S."/>
            <person name="Takeuchi C."/>
            <person name="Wada T."/>
            <person name="Watanabe A."/>
            <person name="Yamada M."/>
            <person name="Yasuda M."/>
            <person name="Tabata S."/>
        </authorList>
    </citation>
    <scope>NUCLEOTIDE SEQUENCE [LARGE SCALE GENOMIC DNA]</scope>
    <source>
        <strain>cv. Columbia</strain>
    </source>
</reference>
<reference key="2">
    <citation type="journal article" date="2017" name="Plant J.">
        <title>Araport11: a complete reannotation of the Arabidopsis thaliana reference genome.</title>
        <authorList>
            <person name="Cheng C.Y."/>
            <person name="Krishnakumar V."/>
            <person name="Chan A.P."/>
            <person name="Thibaud-Nissen F."/>
            <person name="Schobel S."/>
            <person name="Town C.D."/>
        </authorList>
    </citation>
    <scope>GENOME REANNOTATION</scope>
    <source>
        <strain>cv. Columbia</strain>
    </source>
</reference>
<reference key="3">
    <citation type="journal article" date="2003" name="Science">
        <title>Empirical analysis of transcriptional activity in the Arabidopsis genome.</title>
        <authorList>
            <person name="Yamada K."/>
            <person name="Lim J."/>
            <person name="Dale J.M."/>
            <person name="Chen H."/>
            <person name="Shinn P."/>
            <person name="Palm C.J."/>
            <person name="Southwick A.M."/>
            <person name="Wu H.C."/>
            <person name="Kim C.J."/>
            <person name="Nguyen M."/>
            <person name="Pham P.K."/>
            <person name="Cheuk R.F."/>
            <person name="Karlin-Newmann G."/>
            <person name="Liu S.X."/>
            <person name="Lam B."/>
            <person name="Sakano H."/>
            <person name="Wu T."/>
            <person name="Yu G."/>
            <person name="Miranda M."/>
            <person name="Quach H.L."/>
            <person name="Tripp M."/>
            <person name="Chang C.H."/>
            <person name="Lee J.M."/>
            <person name="Toriumi M.J."/>
            <person name="Chan M.M."/>
            <person name="Tang C.C."/>
            <person name="Onodera C.S."/>
            <person name="Deng J.M."/>
            <person name="Akiyama K."/>
            <person name="Ansari Y."/>
            <person name="Arakawa T."/>
            <person name="Banh J."/>
            <person name="Banno F."/>
            <person name="Bowser L."/>
            <person name="Brooks S.Y."/>
            <person name="Carninci P."/>
            <person name="Chao Q."/>
            <person name="Choy N."/>
            <person name="Enju A."/>
            <person name="Goldsmith A.D."/>
            <person name="Gurjal M."/>
            <person name="Hansen N.F."/>
            <person name="Hayashizaki Y."/>
            <person name="Johnson-Hopson C."/>
            <person name="Hsuan V.W."/>
            <person name="Iida K."/>
            <person name="Karnes M."/>
            <person name="Khan S."/>
            <person name="Koesema E."/>
            <person name="Ishida J."/>
            <person name="Jiang P.X."/>
            <person name="Jones T."/>
            <person name="Kawai J."/>
            <person name="Kamiya A."/>
            <person name="Meyers C."/>
            <person name="Nakajima M."/>
            <person name="Narusaka M."/>
            <person name="Seki M."/>
            <person name="Sakurai T."/>
            <person name="Satou M."/>
            <person name="Tamse R."/>
            <person name="Vaysberg M."/>
            <person name="Wallender E.K."/>
            <person name="Wong C."/>
            <person name="Yamamura Y."/>
            <person name="Yuan S."/>
            <person name="Shinozaki K."/>
            <person name="Davis R.W."/>
            <person name="Theologis A."/>
            <person name="Ecker J.R."/>
        </authorList>
    </citation>
    <scope>NUCLEOTIDE SEQUENCE [LARGE SCALE MRNA]</scope>
    <source>
        <strain>cv. Columbia</strain>
    </source>
</reference>
<reference key="4">
    <citation type="journal article" date="2006" name="Plant Physiol.">
        <title>Genome-wide analysis of the ERF gene family in Arabidopsis and rice.</title>
        <authorList>
            <person name="Nakano T."/>
            <person name="Suzuki K."/>
            <person name="Fujimura T."/>
            <person name="Shinshi H."/>
        </authorList>
    </citation>
    <scope>GENE FAMILY</scope>
    <scope>NOMENCLATURE</scope>
</reference>
<protein>
    <recommendedName>
        <fullName>Ethylene-responsive transcription factor ERF011</fullName>
    </recommendedName>
</protein>
<keyword id="KW-0010">Activator</keyword>
<keyword id="KW-0238">DNA-binding</keyword>
<keyword id="KW-0936">Ethylene signaling pathway</keyword>
<keyword id="KW-0539">Nucleus</keyword>
<keyword id="KW-1185">Reference proteome</keyword>
<keyword id="KW-0804">Transcription</keyword>
<keyword id="KW-0805">Transcription regulation</keyword>
<accession>Q9SNE1</accession>
<dbReference type="EMBL" id="AL132976">
    <property type="protein sequence ID" value="CAB62305.1"/>
    <property type="molecule type" value="Genomic_DNA"/>
</dbReference>
<dbReference type="EMBL" id="CP002686">
    <property type="protein sequence ID" value="AEE78646.1"/>
    <property type="molecule type" value="Genomic_DNA"/>
</dbReference>
<dbReference type="EMBL" id="AY045579">
    <property type="protein sequence ID" value="AAK73937.1"/>
    <property type="molecule type" value="mRNA"/>
</dbReference>
<dbReference type="EMBL" id="AY093792">
    <property type="protein sequence ID" value="AAM10408.1"/>
    <property type="molecule type" value="mRNA"/>
</dbReference>
<dbReference type="PIR" id="T45572">
    <property type="entry name" value="T45572"/>
</dbReference>
<dbReference type="SMR" id="Q9SNE1"/>
<dbReference type="BioGRID" id="9506">
    <property type="interactions" value="1"/>
</dbReference>
<dbReference type="FunCoup" id="Q9SNE1">
    <property type="interactions" value="49"/>
</dbReference>
<dbReference type="STRING" id="3702.Q9SNE1"/>
<dbReference type="PaxDb" id="3702-AT3G50260.1"/>
<dbReference type="EnsemblPlants" id="AT3G50260.1">
    <property type="protein sequence ID" value="AT3G50260.1"/>
    <property type="gene ID" value="AT3G50260"/>
</dbReference>
<dbReference type="Gramene" id="AT3G50260.1">
    <property type="protein sequence ID" value="AT3G50260.1"/>
    <property type="gene ID" value="AT3G50260"/>
</dbReference>
<dbReference type="KEGG" id="ath:AT3G50260"/>
<dbReference type="Araport" id="AT3G50260"/>
<dbReference type="TAIR" id="AT3G50260">
    <property type="gene designation" value="CEJ1"/>
</dbReference>
<dbReference type="eggNOG" id="ENOG502S0BY">
    <property type="taxonomic scope" value="Eukaryota"/>
</dbReference>
<dbReference type="HOGENOM" id="CLU_063331_7_2_1"/>
<dbReference type="InParanoid" id="Q9SNE1"/>
<dbReference type="OMA" id="ENSDCDW"/>
<dbReference type="OrthoDB" id="1937547at2759"/>
<dbReference type="PhylomeDB" id="Q9SNE1"/>
<dbReference type="PRO" id="PR:Q9SNE1"/>
<dbReference type="Proteomes" id="UP000006548">
    <property type="component" value="Chromosome 3"/>
</dbReference>
<dbReference type="ExpressionAtlas" id="Q9SNE1">
    <property type="expression patterns" value="baseline and differential"/>
</dbReference>
<dbReference type="GO" id="GO:0005634">
    <property type="term" value="C:nucleus"/>
    <property type="evidence" value="ECO:0007669"/>
    <property type="project" value="UniProtKB-SubCell"/>
</dbReference>
<dbReference type="GO" id="GO:0003700">
    <property type="term" value="F:DNA-binding transcription factor activity"/>
    <property type="evidence" value="ECO:0000250"/>
    <property type="project" value="TAIR"/>
</dbReference>
<dbReference type="GO" id="GO:0000976">
    <property type="term" value="F:transcription cis-regulatory region binding"/>
    <property type="evidence" value="ECO:0000353"/>
    <property type="project" value="TAIR"/>
</dbReference>
<dbReference type="GO" id="GO:0042742">
    <property type="term" value="P:defense response to bacterium"/>
    <property type="evidence" value="ECO:0000315"/>
    <property type="project" value="TAIR"/>
</dbReference>
<dbReference type="GO" id="GO:0009873">
    <property type="term" value="P:ethylene-activated signaling pathway"/>
    <property type="evidence" value="ECO:0007669"/>
    <property type="project" value="UniProtKB-KW"/>
</dbReference>
<dbReference type="GO" id="GO:0009617">
    <property type="term" value="P:response to bacterium"/>
    <property type="evidence" value="ECO:0000270"/>
    <property type="project" value="TAIR"/>
</dbReference>
<dbReference type="GO" id="GO:0009409">
    <property type="term" value="P:response to cold"/>
    <property type="evidence" value="ECO:0000270"/>
    <property type="project" value="TAIR"/>
</dbReference>
<dbReference type="CDD" id="cd00018">
    <property type="entry name" value="AP2"/>
    <property type="match status" value="1"/>
</dbReference>
<dbReference type="FunFam" id="3.30.730.10:FF:000001">
    <property type="entry name" value="Ethylene-responsive transcription factor 2"/>
    <property type="match status" value="1"/>
</dbReference>
<dbReference type="Gene3D" id="3.30.730.10">
    <property type="entry name" value="AP2/ERF domain"/>
    <property type="match status" value="1"/>
</dbReference>
<dbReference type="InterPro" id="IPR001471">
    <property type="entry name" value="AP2/ERF_dom"/>
</dbReference>
<dbReference type="InterPro" id="IPR036955">
    <property type="entry name" value="AP2/ERF_dom_sf"/>
</dbReference>
<dbReference type="InterPro" id="IPR016177">
    <property type="entry name" value="DNA-bd_dom_sf"/>
</dbReference>
<dbReference type="PANTHER" id="PTHR31729:SF6">
    <property type="entry name" value="ETHYLENE-RESPONSIVE TRANSCRIPTION FACTOR ERF011"/>
    <property type="match status" value="1"/>
</dbReference>
<dbReference type="PANTHER" id="PTHR31729">
    <property type="entry name" value="ETHYLENE-RESPONSIVE TRANSCRIPTION FACTOR RAP2-1-RELATED"/>
    <property type="match status" value="1"/>
</dbReference>
<dbReference type="Pfam" id="PF00847">
    <property type="entry name" value="AP2"/>
    <property type="match status" value="1"/>
</dbReference>
<dbReference type="PRINTS" id="PR00367">
    <property type="entry name" value="ETHRSPELEMNT"/>
</dbReference>
<dbReference type="SMART" id="SM00380">
    <property type="entry name" value="AP2"/>
    <property type="match status" value="1"/>
</dbReference>
<dbReference type="SUPFAM" id="SSF54171">
    <property type="entry name" value="DNA-binding domain"/>
    <property type="match status" value="1"/>
</dbReference>
<dbReference type="PROSITE" id="PS51032">
    <property type="entry name" value="AP2_ERF"/>
    <property type="match status" value="1"/>
</dbReference>